<name>CAMP_HYLML</name>
<protein>
    <recommendedName>
        <fullName evidence="1">Cathelicidin antimicrobial peptide</fullName>
    </recommendedName>
    <component>
        <recommendedName>
            <fullName evidence="1">Antibacterial peptide FALL-39</fullName>
        </recommendedName>
        <alternativeName>
            <fullName evidence="1">FALL-39 peptide antibiotic</fullName>
        </alternativeName>
    </component>
    <component>
        <recommendedName>
            <fullName evidence="1">Antibacterial peptide LL-37</fullName>
        </recommendedName>
    </component>
</protein>
<dbReference type="EMBL" id="DQ471364">
    <property type="protein sequence ID" value="ABE96628.1"/>
    <property type="molecule type" value="Genomic_DNA"/>
</dbReference>
<dbReference type="SMR" id="Q1KLX8"/>
<dbReference type="GO" id="GO:0005615">
    <property type="term" value="C:extracellular space"/>
    <property type="evidence" value="ECO:0007669"/>
    <property type="project" value="TreeGrafter"/>
</dbReference>
<dbReference type="GO" id="GO:0031982">
    <property type="term" value="C:vesicle"/>
    <property type="evidence" value="ECO:0007669"/>
    <property type="project" value="UniProtKB-SubCell"/>
</dbReference>
<dbReference type="GO" id="GO:0001530">
    <property type="term" value="F:lipopolysaccharide binding"/>
    <property type="evidence" value="ECO:0007669"/>
    <property type="project" value="TreeGrafter"/>
</dbReference>
<dbReference type="GO" id="GO:0061844">
    <property type="term" value="P:antimicrobial humoral immune response mediated by antimicrobial peptide"/>
    <property type="evidence" value="ECO:0007669"/>
    <property type="project" value="TreeGrafter"/>
</dbReference>
<dbReference type="GO" id="GO:0050829">
    <property type="term" value="P:defense response to Gram-negative bacterium"/>
    <property type="evidence" value="ECO:0007669"/>
    <property type="project" value="TreeGrafter"/>
</dbReference>
<dbReference type="GO" id="GO:0050830">
    <property type="term" value="P:defense response to Gram-positive bacterium"/>
    <property type="evidence" value="ECO:0007669"/>
    <property type="project" value="TreeGrafter"/>
</dbReference>
<dbReference type="GO" id="GO:0045087">
    <property type="term" value="P:innate immune response"/>
    <property type="evidence" value="ECO:0007669"/>
    <property type="project" value="UniProtKB-KW"/>
</dbReference>
<dbReference type="GO" id="GO:0042119">
    <property type="term" value="P:neutrophil activation"/>
    <property type="evidence" value="ECO:0000250"/>
    <property type="project" value="UniProtKB"/>
</dbReference>
<dbReference type="FunFam" id="3.10.450.10:FF:000003">
    <property type="entry name" value="Cathelicidin antimicrobial peptide"/>
    <property type="match status" value="1"/>
</dbReference>
<dbReference type="Gene3D" id="3.10.450.10">
    <property type="match status" value="1"/>
</dbReference>
<dbReference type="InterPro" id="IPR001894">
    <property type="entry name" value="Cathelicidin-like"/>
</dbReference>
<dbReference type="InterPro" id="IPR018216">
    <property type="entry name" value="Cathelicidin_CS"/>
</dbReference>
<dbReference type="InterPro" id="IPR022746">
    <property type="entry name" value="Cathlecidin_C"/>
</dbReference>
<dbReference type="InterPro" id="IPR046350">
    <property type="entry name" value="Cystatin_sf"/>
</dbReference>
<dbReference type="PANTHER" id="PTHR10206">
    <property type="entry name" value="CATHELICIDIN"/>
    <property type="match status" value="1"/>
</dbReference>
<dbReference type="PANTHER" id="PTHR10206:SF2">
    <property type="entry name" value="CATHELICIDIN ANTIMICROBIAL PEPTIDE"/>
    <property type="match status" value="1"/>
</dbReference>
<dbReference type="Pfam" id="PF12153">
    <property type="entry name" value="CAP18_C"/>
    <property type="match status" value="1"/>
</dbReference>
<dbReference type="Pfam" id="PF00666">
    <property type="entry name" value="Cathelicidins"/>
    <property type="match status" value="1"/>
</dbReference>
<dbReference type="SUPFAM" id="SSF54403">
    <property type="entry name" value="Cystatin/monellin"/>
    <property type="match status" value="1"/>
</dbReference>
<dbReference type="PROSITE" id="PS00946">
    <property type="entry name" value="CATHELICIDINS_1"/>
    <property type="match status" value="1"/>
</dbReference>
<dbReference type="PROSITE" id="PS00947">
    <property type="entry name" value="CATHELICIDINS_2"/>
    <property type="match status" value="1"/>
</dbReference>
<reference key="1">
    <citation type="journal article" date="2006" name="J. Biol. Chem.">
        <title>Evolution of the primate cathelicidin. Correlation between structural variations and antimicrobial activity.</title>
        <authorList>
            <person name="Zelezetsky I."/>
            <person name="Pontillo A."/>
            <person name="Puzzi L."/>
            <person name="Antcheva N."/>
            <person name="Segat L."/>
            <person name="Pacor S."/>
            <person name="Crovella S."/>
            <person name="Tossi A."/>
        </authorList>
    </citation>
    <scope>NUCLEOTIDE SEQUENCE [GENOMIC DNA]</scope>
</reference>
<feature type="signal peptide" evidence="3">
    <location>
        <begin position="1"/>
        <end position="30"/>
    </location>
</feature>
<feature type="propeptide" id="PRO_0000251761" description="Cathelin-like domain (CLD)" evidence="1">
    <location>
        <begin position="31"/>
        <end position="131"/>
    </location>
</feature>
<feature type="peptide" id="PRO_0000251762" description="Antibacterial peptide FALL-39" evidence="1">
    <location>
        <begin position="132"/>
        <end position="170"/>
    </location>
</feature>
<feature type="peptide" id="PRO_0000251763" description="Antibacterial peptide LL-37" evidence="1">
    <location>
        <begin position="134"/>
        <end position="170"/>
    </location>
</feature>
<feature type="region of interest" description="Active core" evidence="1">
    <location>
        <begin position="150"/>
        <end position="162"/>
    </location>
</feature>
<feature type="disulfide bond" evidence="1">
    <location>
        <begin position="86"/>
        <end position="97"/>
    </location>
</feature>
<feature type="disulfide bond" evidence="1">
    <location>
        <begin position="108"/>
        <end position="125"/>
    </location>
</feature>
<organism>
    <name type="scientific">Hylobates moloch</name>
    <name type="common">Silvery gibbon</name>
    <dbReference type="NCBI Taxonomy" id="81572"/>
    <lineage>
        <taxon>Eukaryota</taxon>
        <taxon>Metazoa</taxon>
        <taxon>Chordata</taxon>
        <taxon>Craniata</taxon>
        <taxon>Vertebrata</taxon>
        <taxon>Euteleostomi</taxon>
        <taxon>Mammalia</taxon>
        <taxon>Eutheria</taxon>
        <taxon>Euarchontoglires</taxon>
        <taxon>Primates</taxon>
        <taxon>Haplorrhini</taxon>
        <taxon>Catarrhini</taxon>
        <taxon>Hylobatidae</taxon>
        <taxon>Hylobates</taxon>
    </lineage>
</organism>
<keyword id="KW-0044">Antibiotic</keyword>
<keyword id="KW-0929">Antimicrobial</keyword>
<keyword id="KW-0165">Cleavage on pair of basic residues</keyword>
<keyword id="KW-1015">Disulfide bond</keyword>
<keyword id="KW-0391">Immunity</keyword>
<keyword id="KW-0399">Innate immunity</keyword>
<keyword id="KW-0964">Secreted</keyword>
<keyword id="KW-0732">Signal</keyword>
<evidence type="ECO:0000250" key="1">
    <source>
        <dbReference type="UniProtKB" id="P49913"/>
    </source>
</evidence>
<evidence type="ECO:0000250" key="2">
    <source>
        <dbReference type="UniProtKB" id="P54229"/>
    </source>
</evidence>
<evidence type="ECO:0000255" key="3"/>
<evidence type="ECO:0000305" key="4"/>
<sequence>MKTQRDGHSLGGWSLMLLLLGLLMPLAIVAQVLSYKEAVLRAIDGINQRSSDANLYRLLDLDPRPTMDGDPDTPKPVSFTVKETVCPRTTQQSPEDCDFKKDGLVKRCVGTVTLNQARDSFDISCDKDNRRFASLGNFFRKARKKIGEEFKRIVQRIKDFLQHLIPRTEA</sequence>
<gene>
    <name evidence="1" type="primary">CAMP</name>
</gene>
<comment type="function">
    <text evidence="1">Antimicrobial protein that is an integral component of the innate immune system (By similarity). Binds to bacterial lipopolysaccharides (LPS) (By similarity). Acts via neutrophil N-formyl peptide receptors to enhance the release of CXCL2 (By similarity). Postsecretory processing generates multiple cathelicidin antimicrobial peptides with various lengths which act as a topical antimicrobial defense in sweat on skin (By similarity). The unprocessed precursor form, cathelicidin antimicrobial peptide, inhibits the growth of Gram-negative E.coli and E.aerogenes with efficiencies comparable to that of the mature peptide LL-37 (in vitro) (By similarity).</text>
</comment>
<comment type="function">
    <molecule>Antibacterial peptide LL-37</molecule>
    <text evidence="1">Antimicrobial peptide that is an integral component of the innate immune system (By similarity). Binds to bacterial lipopolysaccharides (LPS) (By similarity). Causes membrane permeabilization by forming transmembrane pores (in vitro) (By similarity). Causes lysis of E.coli (By similarity). Exhibits antimicrobial activity against Gram-negative bacteria such as P.aeruginosa, S.typhimurium, E.aerogenes, E.coli and P.syringae, Gram-positive bacteria such as L.monocytogenes, S.epidermidis, S.pyogenes and S.aureus, as well as vancomycin-resistant enterococci (in vitro) (By similarity). Exhibits antimicrobial activity against methicillin-resistant S.aureus, P.mirabilis, and C.albicans in low-salt media, but not in media containing 100 mM NaCl (in vitro) (By similarity). Forms chiral supramolecular assemblies with quinolone signal (PQS) molecules of P.aeruginosa, which may lead to interference of bacterial quorum signaling and perturbance of bacterial biofilm formation (By similarity). May form supramolecular fiber-like assemblies on bacterial membranes (By similarity). Induces cytokine and chemokine producation as well as TNF/TNFA and CSF2/GMCSF production in normal human keratinocytes (By similarity). Exhibits hemolytic activity against red blood cells (By similarity).</text>
</comment>
<comment type="function">
    <molecule>Antibacterial peptide FALL-39</molecule>
    <text evidence="1">Exhibits antimicrobial activity against E.coli and B.megaterium (in vitro).</text>
</comment>
<comment type="subunit">
    <molecule>Antibacterial peptide LL-37</molecule>
    <text evidence="1">Monomer, homodimer or homotrimer (in vitro) (By similarity). Oligomerizes as tetra- or hexamer in solution (in vitro) (By similarity).</text>
</comment>
<comment type="subcellular location">
    <subcellularLocation>
        <location evidence="2">Secreted</location>
    </subcellularLocation>
    <subcellularLocation>
        <location evidence="2">Vesicle</location>
    </subcellularLocation>
    <text evidence="2">Stored as pro-peptide in granules and phagolysosomes of neutrophils (By similarity). Secreted in sweat onto skin (By similarity).</text>
</comment>
<comment type="domain">
    <text evidence="2">The cathelin-like domain (CLD), which is the propeptide part, does not seem to exhibit auto-inhibitory function, as it does not inhibit the antibacterial activity of antibacterial peptide LL-37.</text>
</comment>
<comment type="domain">
    <molecule>Antibacterial peptide LL-37</molecule>
    <text evidence="2">Undergoes conformational change in the presence of lipid A, transitioning from a random coil to an alpha-helical structure.</text>
</comment>
<comment type="domain">
    <molecule>Antibacterial peptide LL-37</molecule>
    <text evidence="2">Residues 17-29 of LL-37 represent the active core of the antimicrobial peptide. Forms ribbon-like fibrils and exhibits antibacterial activity against Gram-positive M.luteus (By similarity). Also exhibits antibacterial activity against Gram-negative E.coli and P.fluorescens (By similarity).</text>
</comment>
<comment type="PTM">
    <text evidence="1">Proteolytically cleaved by proteinase PRTN3 into antibacterial peptide LL-37 (By similarity). Proteolytically cleaved by cathepsin CTSG and neutrophil elastase ELANE (By similarity).</text>
</comment>
<comment type="PTM">
    <molecule>Antibacterial peptide LL-37</molecule>
    <text evidence="1">Resistant to proteolytic degradation in solution, and when bound to both zwitterionic (mimicking mammalian membranes) and negatively charged membranes (mimicking bacterial membranes).</text>
</comment>
<comment type="PTM">
    <text evidence="1">After secretion onto the skin surface, the CAMP gene product is processed by a serine protease-dependent mechanism into multiple novel antimicrobial peptides distinct from and shorter than cathelicidin LL-37 (By similarity). These peptides show enhanced antimicrobial action, acquiring the ability to kill skin pathogens such as S.aureus, E.coli and C.albicans. These peptides have lost the ability to stimulate CXCL8/IL8 release from keratinocytes (By similarity). The peptides act synergistically, killing bacteria at lower concentrations when present together, and maintain activity at increased salt condition (By similarity).</text>
</comment>
<comment type="similarity">
    <text evidence="4">Belongs to the cathelicidin family.</text>
</comment>
<proteinExistence type="inferred from homology"/>
<accession>Q1KLX8</accession>